<name>HSP7C_ICTPU</name>
<dbReference type="EMBL" id="U22460">
    <property type="protein sequence ID" value="AAA64872.1"/>
    <property type="molecule type" value="mRNA"/>
</dbReference>
<dbReference type="RefSeq" id="NP_001187202.1">
    <property type="nucleotide sequence ID" value="NM_001200273.1"/>
</dbReference>
<dbReference type="SMR" id="P47773"/>
<dbReference type="STRING" id="7998.ENSIPUP00000009472"/>
<dbReference type="GeneID" id="100305036"/>
<dbReference type="KEGG" id="ipu:100305036"/>
<dbReference type="OrthoDB" id="2401965at2759"/>
<dbReference type="Proteomes" id="UP000221080">
    <property type="component" value="Chromosome 16"/>
</dbReference>
<dbReference type="GO" id="GO:0005524">
    <property type="term" value="F:ATP binding"/>
    <property type="evidence" value="ECO:0007669"/>
    <property type="project" value="UniProtKB-KW"/>
</dbReference>
<dbReference type="GO" id="GO:0140662">
    <property type="term" value="F:ATP-dependent protein folding chaperone"/>
    <property type="evidence" value="ECO:0007669"/>
    <property type="project" value="InterPro"/>
</dbReference>
<dbReference type="CDD" id="cd10233">
    <property type="entry name" value="ASKHA_NBD_HSP70_HSPA1"/>
    <property type="match status" value="1"/>
</dbReference>
<dbReference type="FunFam" id="2.60.34.10:FF:000002">
    <property type="entry name" value="Heat shock 70 kDa"/>
    <property type="match status" value="1"/>
</dbReference>
<dbReference type="FunFam" id="3.30.420.40:FF:000172">
    <property type="entry name" value="Heat shock 70 kDa protein"/>
    <property type="match status" value="1"/>
</dbReference>
<dbReference type="FunFam" id="3.30.30.30:FF:000001">
    <property type="entry name" value="heat shock 70 kDa protein-like"/>
    <property type="match status" value="1"/>
</dbReference>
<dbReference type="FunFam" id="3.30.420.40:FF:000135">
    <property type="entry name" value="Heat shock cognate 71 kDa protein"/>
    <property type="match status" value="1"/>
</dbReference>
<dbReference type="FunFam" id="3.90.640.10:FF:000134">
    <property type="entry name" value="Heat shock cognate 71 kDa protein"/>
    <property type="match status" value="1"/>
</dbReference>
<dbReference type="FunFam" id="1.20.1270.10:FF:000003">
    <property type="entry name" value="heat shock cognate 71 kDa protein-like"/>
    <property type="match status" value="1"/>
</dbReference>
<dbReference type="FunFam" id="3.30.420.40:FF:000026">
    <property type="entry name" value="Heat shock protein 70"/>
    <property type="match status" value="1"/>
</dbReference>
<dbReference type="Gene3D" id="1.20.1270.10">
    <property type="match status" value="1"/>
</dbReference>
<dbReference type="Gene3D" id="3.30.30.30">
    <property type="match status" value="1"/>
</dbReference>
<dbReference type="Gene3D" id="3.30.420.40">
    <property type="match status" value="2"/>
</dbReference>
<dbReference type="Gene3D" id="3.90.640.10">
    <property type="entry name" value="Actin, Chain A, domain 4"/>
    <property type="match status" value="1"/>
</dbReference>
<dbReference type="Gene3D" id="2.60.34.10">
    <property type="entry name" value="Substrate Binding Domain Of DNAk, Chain A, domain 1"/>
    <property type="match status" value="1"/>
</dbReference>
<dbReference type="InterPro" id="IPR043129">
    <property type="entry name" value="ATPase_NBD"/>
</dbReference>
<dbReference type="InterPro" id="IPR018181">
    <property type="entry name" value="Heat_shock_70_CS"/>
</dbReference>
<dbReference type="InterPro" id="IPR029048">
    <property type="entry name" value="HSP70_C_sf"/>
</dbReference>
<dbReference type="InterPro" id="IPR029047">
    <property type="entry name" value="HSP70_peptide-bd_sf"/>
</dbReference>
<dbReference type="InterPro" id="IPR013126">
    <property type="entry name" value="Hsp_70_fam"/>
</dbReference>
<dbReference type="NCBIfam" id="NF001413">
    <property type="entry name" value="PRK00290.1"/>
    <property type="match status" value="1"/>
</dbReference>
<dbReference type="PANTHER" id="PTHR19375">
    <property type="entry name" value="HEAT SHOCK PROTEIN 70KDA"/>
    <property type="match status" value="1"/>
</dbReference>
<dbReference type="Pfam" id="PF00012">
    <property type="entry name" value="HSP70"/>
    <property type="match status" value="1"/>
</dbReference>
<dbReference type="PRINTS" id="PR00301">
    <property type="entry name" value="HEATSHOCK70"/>
</dbReference>
<dbReference type="SUPFAM" id="SSF53067">
    <property type="entry name" value="Actin-like ATPase domain"/>
    <property type="match status" value="2"/>
</dbReference>
<dbReference type="SUPFAM" id="SSF100934">
    <property type="entry name" value="Heat shock protein 70kD (HSP70), C-terminal subdomain"/>
    <property type="match status" value="1"/>
</dbReference>
<dbReference type="SUPFAM" id="SSF100920">
    <property type="entry name" value="Heat shock protein 70kD (HSP70), peptide-binding domain"/>
    <property type="match status" value="1"/>
</dbReference>
<dbReference type="PROSITE" id="PS00297">
    <property type="entry name" value="HSP70_1"/>
    <property type="match status" value="1"/>
</dbReference>
<dbReference type="PROSITE" id="PS00329">
    <property type="entry name" value="HSP70_2"/>
    <property type="match status" value="1"/>
</dbReference>
<dbReference type="PROSITE" id="PS01036">
    <property type="entry name" value="HSP70_3"/>
    <property type="match status" value="1"/>
</dbReference>
<comment type="function">
    <text evidence="1">Molecular chaperone implicated in a wide variety of cellular processes, including protection of the proteome from stress, folding and transport of newly synthesized polypeptides, activation of proteolysis of misfolded proteins and the formation and dissociation of protein complexes. Plays a pivotal role in the protein quality control system, ensuring the correct folding of proteins, the re-folding of misfolded proteins and controlling the targeting of proteins for subsequent degradation. This is achieved through cycles of ATP binding, ATP hydrolysis and ADP release, mediated by co-chaperones. The affinity of HSP70 for polypeptides is regulated by its nucleotide bound state. In the ATP-bound form, it has a low affinity for substrate proteins. However, upon hydrolysis of the ATP to ADP, it undergoes a conformational change that increases its affinity for substrate proteins. HSP70 goes through repeated cycles of ATP hydrolysis and nucleotide exchange, which permits cycles of substrate binding and release.</text>
</comment>
<comment type="domain">
    <text evidence="1">The N-terminal nucleotide binding domain (NBD) (also known as the ATPase domain) is responsible for binding and hydrolyzing ATP. The C-terminal substrate-binding domain (SBD) (also known as peptide-binding domain) binds to the client/substrate proteins. The two domains are allosterically coupled so that, when ATP is bound to the NBD, the SBD binds relatively weakly to clients. When ADP is bound in the NBD, a conformational change enhances the affinity of the SBD for client proteins.</text>
</comment>
<comment type="similarity">
    <text evidence="3">Belongs to the heat shock protein 70 family.</text>
</comment>
<sequence length="649" mass="71340">MSKGPAVGIDLGTTYSCVGVFQHGKVEIIANDQGNRTTPSYVAFTDSERLIGDAAKNQVAMNPTNTIFDAKRLIGRRFEDSVVQADMKHWPFKVISDGGRPRLEVEYKGEAKNFYPEEISSMVLVKMKEIAEAYLGKSINNAVITVPAYFNDSQRQRTKDAGTISGLNVLRIINEPTAAAIAYGLDKKVGSERNVLIFDLGGGTFDVSILTIEDGIFDLKSTAGDTHLGGEDFDNRMVNHFIAEFKRKHKKDISDNKRAVRRLATACERAKRTLSSSTQASIEIDSLYEGVDFYTSITRARFEELNADLFRGTLDPVEKALRDAKMDKAQVHDIVLVGGSTRIPKMEKLLQDFFNGKELNKSINPDEAVAYGAAVQAESSLGDKSENVQDLVLLDVTPLSLGIETAGGVMTVLIKRNTTIPTKQTQTFTTYSDNQPGVLIQVYEGERAMTKDNNLLGKFELTGIPPAPRGVPQIEVTFDIDANGIMNVSAVDKSTGKENKITITNDKGRLSKEDIERMVQEAEKYKAEDDVQRDKVSAKNGLESYAFNMKSTVEDEKLKGKISDEDKHKILDKCNEVISWLDKNQTAEKDEYEHQQKDLEKVCNPIITKLYQSDGGMPGGMPDGMPGGFQELGAAPGGGSSGPTIEEVD</sequence>
<gene>
    <name type="primary">hsc70</name>
</gene>
<organism>
    <name type="scientific">Ictalurus punctatus</name>
    <name type="common">Channel catfish</name>
    <name type="synonym">Silurus punctatus</name>
    <dbReference type="NCBI Taxonomy" id="7998"/>
    <lineage>
        <taxon>Eukaryota</taxon>
        <taxon>Metazoa</taxon>
        <taxon>Chordata</taxon>
        <taxon>Craniata</taxon>
        <taxon>Vertebrata</taxon>
        <taxon>Euteleostomi</taxon>
        <taxon>Actinopterygii</taxon>
        <taxon>Neopterygii</taxon>
        <taxon>Teleostei</taxon>
        <taxon>Ostariophysi</taxon>
        <taxon>Siluriformes</taxon>
        <taxon>Ictaluridae</taxon>
        <taxon>Ictalurus</taxon>
    </lineage>
</organism>
<reference key="1">
    <citation type="journal article" date="1996" name="Comp. Biochem. Physiol.">
        <title>Identification and characterization of a heat shock protein 70 family member in channel catfish (Ictalurus punctatus).</title>
        <authorList>
            <person name="Luft J.C."/>
            <person name="Wilson M.R."/>
            <person name="Bly J.E."/>
            <person name="Miller N.W."/>
            <person name="Clem L.W."/>
        </authorList>
    </citation>
    <scope>NUCLEOTIDE SEQUENCE [MRNA]</scope>
</reference>
<proteinExistence type="evidence at transcript level"/>
<feature type="chain" id="PRO_0000078277" description="Heat shock cognate 71 kDa protein">
    <location>
        <begin position="1"/>
        <end position="649"/>
    </location>
</feature>
<feature type="region of interest" description="Nucleotide-binding domain (NBD)" evidence="1">
    <location>
        <begin position="2"/>
        <end position="386"/>
    </location>
</feature>
<feature type="region of interest" description="Substrate-binding domain (SBD)" evidence="1">
    <location>
        <begin position="394"/>
        <end position="509"/>
    </location>
</feature>
<feature type="region of interest" description="Disordered" evidence="2">
    <location>
        <begin position="613"/>
        <end position="649"/>
    </location>
</feature>
<feature type="compositionally biased region" description="Gly residues" evidence="2">
    <location>
        <begin position="616"/>
        <end position="627"/>
    </location>
</feature>
<protein>
    <recommendedName>
        <fullName>Heat shock cognate 71 kDa protein</fullName>
    </recommendedName>
</protein>
<keyword id="KW-0067">ATP-binding</keyword>
<keyword id="KW-0547">Nucleotide-binding</keyword>
<keyword id="KW-0346">Stress response</keyword>
<accession>P47773</accession>
<evidence type="ECO:0000250" key="1">
    <source>
        <dbReference type="UniProtKB" id="P11142"/>
    </source>
</evidence>
<evidence type="ECO:0000256" key="2">
    <source>
        <dbReference type="SAM" id="MobiDB-lite"/>
    </source>
</evidence>
<evidence type="ECO:0000305" key="3"/>